<name>Y1649_ARATH</name>
<feature type="signal peptide" evidence="3">
    <location>
        <begin position="1"/>
        <end position="24"/>
    </location>
</feature>
<feature type="chain" id="PRO_0000401323" description="G-type lectin S-receptor-like serine/threonine-protein kinase At1g61490">
    <location>
        <begin position="25"/>
        <end position="804"/>
    </location>
</feature>
<feature type="topological domain" description="Extracellular" evidence="3">
    <location>
        <begin position="25"/>
        <end position="425"/>
    </location>
</feature>
<feature type="transmembrane region" description="Helical" evidence="3">
    <location>
        <begin position="426"/>
        <end position="446"/>
    </location>
</feature>
<feature type="topological domain" description="Cytoplasmic" evidence="3">
    <location>
        <begin position="447"/>
        <end position="804"/>
    </location>
</feature>
<feature type="domain" description="Bulb-type lectin" evidence="4">
    <location>
        <begin position="25"/>
        <end position="144"/>
    </location>
</feature>
<feature type="domain" description="EGF-like">
    <location>
        <begin position="278"/>
        <end position="314"/>
    </location>
</feature>
<feature type="domain" description="PAN" evidence="6">
    <location>
        <begin position="333"/>
        <end position="415"/>
    </location>
</feature>
<feature type="domain" description="Protein kinase" evidence="5">
    <location>
        <begin position="490"/>
        <end position="775"/>
    </location>
</feature>
<feature type="region of interest" description="CaM-binding" evidence="1">
    <location>
        <begin position="579"/>
        <end position="596"/>
    </location>
</feature>
<feature type="active site" description="Proton acceptor" evidence="5 7">
    <location>
        <position position="615"/>
    </location>
</feature>
<feature type="binding site" evidence="5">
    <location>
        <begin position="496"/>
        <end position="504"/>
    </location>
    <ligand>
        <name>ATP</name>
        <dbReference type="ChEBI" id="CHEBI:30616"/>
    </ligand>
</feature>
<feature type="binding site" evidence="5">
    <location>
        <position position="518"/>
    </location>
    <ligand>
        <name>ATP</name>
        <dbReference type="ChEBI" id="CHEBI:30616"/>
    </ligand>
</feature>
<feature type="modified residue" description="Phosphoserine" evidence="2">
    <location>
        <position position="524"/>
    </location>
</feature>
<feature type="modified residue" description="Phosphoserine" evidence="2">
    <location>
        <position position="539"/>
    </location>
</feature>
<feature type="modified residue" description="Phosphoserine" evidence="2">
    <location>
        <position position="619"/>
    </location>
</feature>
<feature type="modified residue" description="Phosphoserine" evidence="2">
    <location>
        <position position="632"/>
    </location>
</feature>
<feature type="modified residue" description="Phosphothreonine" evidence="2">
    <location>
        <position position="649"/>
    </location>
</feature>
<feature type="modified residue" description="Phosphoserine" evidence="2">
    <location>
        <position position="692"/>
    </location>
</feature>
<feature type="glycosylation site" description="N-linked (GlcNAc...) asparagine" evidence="3">
    <location>
        <position position="53"/>
    </location>
</feature>
<feature type="glycosylation site" description="N-linked (GlcNAc...) asparagine" evidence="3">
    <location>
        <position position="94"/>
    </location>
</feature>
<feature type="glycosylation site" description="N-linked (GlcNAc...) asparagine" evidence="3">
    <location>
        <position position="117"/>
    </location>
</feature>
<feature type="glycosylation site" description="N-linked (GlcNAc...) asparagine" evidence="3">
    <location>
        <position position="134"/>
    </location>
</feature>
<feature type="glycosylation site" description="N-linked (GlcNAc...) asparagine" evidence="3">
    <location>
        <position position="236"/>
    </location>
</feature>
<feature type="glycosylation site" description="N-linked (GlcNAc...) asparagine" evidence="3">
    <location>
        <position position="267"/>
    </location>
</feature>
<feature type="glycosylation site" description="N-linked (GlcNAc...) asparagine" evidence="3">
    <location>
        <position position="320"/>
    </location>
</feature>
<feature type="glycosylation site" description="N-linked (GlcNAc...) asparagine" evidence="3">
    <location>
        <position position="336"/>
    </location>
</feature>
<feature type="glycosylation site" description="N-linked (GlcNAc...) asparagine" evidence="3">
    <location>
        <position position="375"/>
    </location>
</feature>
<feature type="disulfide bond" evidence="1">
    <location>
        <begin position="282"/>
        <end position="294"/>
    </location>
</feature>
<feature type="disulfide bond" evidence="1">
    <location>
        <begin position="288"/>
        <end position="302"/>
    </location>
</feature>
<feature type="disulfide bond" evidence="1">
    <location>
        <begin position="368"/>
        <end position="389"/>
    </location>
</feature>
<feature type="disulfide bond" evidence="1">
    <location>
        <begin position="372"/>
        <end position="378"/>
    </location>
</feature>
<gene>
    <name type="ordered locus">At1g61490</name>
    <name type="ORF">T1F9.1</name>
</gene>
<sequence>MGKKRIVFFACLLLFTVLLRFSYAGITTESPLSVEQTLSSSNGIYELGFFSPNNSQNLYVGIWFKGIIPRVVVWVANRETPTTDTSANLAISSNGSLLLFNGKHGVVWSIGENFASNGSRAELTDNGNLVVIDNASGRTLWESFEHFGDTMLPFSSLMYNLATGEKRVLTSWKTDTDPSPGVFVGQITPQVPSQVLIMRGSTRYYRTGPWAKTRFTGIPLMDDTYASPFSLQQDANGSGFFTYFDRSFKLSRIIISSEGSMKRFRHNGTDWELSYMAPANSCDIYGVCGPFGLCIVSVPLKCKCLKGFVPHSTEEWKRGNWTGGCARLTELHCQGNSTGKDVNIFHPVTNVKLPDFYEYESSVDAEECHQSCLHNCSCLAFAYIHGIGCLIWNQNLMDAVQFSAGGEILSIRLAHSELGGNKRNKIIVASTVSLSLFVILTSAAFGFWRYRVKHKAYTLKDAWRNDLKSKEVPGLEFFEMNTIQTATNNFSLSNKLGQGGFGSVYKGKLQDGKEIAVKQLSSSSGQGKEEFMNEIVLISKLQHRNLVRVLGCCIEGEEKLLIYEFMLNKSLDTFVFDARKKLEVDWPKRFDIVQGIARGLLYLHRDSRLKVIHRDLKVSNILLDEKMNPKISDFGLARMYEGTQCQDKTRRVVGTLGYMSPEYAWTGVFSEKSDIYSFGVLLLEIIIGEKISRFSYGEEGKTLLAYAWESWGETKGIDLLDQDLADSCRPLEVGRCVQIGLLCVQHQPADRPNTLELLAMLTTTSDLPSPKQPTFVVHSRDDESSLSKDLFTVNEMTQSMILGR</sequence>
<reference key="1">
    <citation type="journal article" date="2000" name="Nature">
        <title>Sequence and analysis of chromosome 1 of the plant Arabidopsis thaliana.</title>
        <authorList>
            <person name="Theologis A."/>
            <person name="Ecker J.R."/>
            <person name="Palm C.J."/>
            <person name="Federspiel N.A."/>
            <person name="Kaul S."/>
            <person name="White O."/>
            <person name="Alonso J."/>
            <person name="Altafi H."/>
            <person name="Araujo R."/>
            <person name="Bowman C.L."/>
            <person name="Brooks S.Y."/>
            <person name="Buehler E."/>
            <person name="Chan A."/>
            <person name="Chao Q."/>
            <person name="Chen H."/>
            <person name="Cheuk R.F."/>
            <person name="Chin C.W."/>
            <person name="Chung M.K."/>
            <person name="Conn L."/>
            <person name="Conway A.B."/>
            <person name="Conway A.R."/>
            <person name="Creasy T.H."/>
            <person name="Dewar K."/>
            <person name="Dunn P."/>
            <person name="Etgu P."/>
            <person name="Feldblyum T.V."/>
            <person name="Feng J.-D."/>
            <person name="Fong B."/>
            <person name="Fujii C.Y."/>
            <person name="Gill J.E."/>
            <person name="Goldsmith A.D."/>
            <person name="Haas B."/>
            <person name="Hansen N.F."/>
            <person name="Hughes B."/>
            <person name="Huizar L."/>
            <person name="Hunter J.L."/>
            <person name="Jenkins J."/>
            <person name="Johnson-Hopson C."/>
            <person name="Khan S."/>
            <person name="Khaykin E."/>
            <person name="Kim C.J."/>
            <person name="Koo H.L."/>
            <person name="Kremenetskaia I."/>
            <person name="Kurtz D.B."/>
            <person name="Kwan A."/>
            <person name="Lam B."/>
            <person name="Langin-Hooper S."/>
            <person name="Lee A."/>
            <person name="Lee J.M."/>
            <person name="Lenz C.A."/>
            <person name="Li J.H."/>
            <person name="Li Y.-P."/>
            <person name="Lin X."/>
            <person name="Liu S.X."/>
            <person name="Liu Z.A."/>
            <person name="Luros J.S."/>
            <person name="Maiti R."/>
            <person name="Marziali A."/>
            <person name="Militscher J."/>
            <person name="Miranda M."/>
            <person name="Nguyen M."/>
            <person name="Nierman W.C."/>
            <person name="Osborne B.I."/>
            <person name="Pai G."/>
            <person name="Peterson J."/>
            <person name="Pham P.K."/>
            <person name="Rizzo M."/>
            <person name="Rooney T."/>
            <person name="Rowley D."/>
            <person name="Sakano H."/>
            <person name="Salzberg S.L."/>
            <person name="Schwartz J.R."/>
            <person name="Shinn P."/>
            <person name="Southwick A.M."/>
            <person name="Sun H."/>
            <person name="Tallon L.J."/>
            <person name="Tambunga G."/>
            <person name="Toriumi M.J."/>
            <person name="Town C.D."/>
            <person name="Utterback T."/>
            <person name="Van Aken S."/>
            <person name="Vaysberg M."/>
            <person name="Vysotskaia V.S."/>
            <person name="Walker M."/>
            <person name="Wu D."/>
            <person name="Yu G."/>
            <person name="Fraser C.M."/>
            <person name="Venter J.C."/>
            <person name="Davis R.W."/>
        </authorList>
    </citation>
    <scope>NUCLEOTIDE SEQUENCE [LARGE SCALE GENOMIC DNA]</scope>
    <source>
        <strain>cv. Columbia</strain>
    </source>
</reference>
<reference key="2">
    <citation type="journal article" date="2017" name="Plant J.">
        <title>Araport11: a complete reannotation of the Arabidopsis thaliana reference genome.</title>
        <authorList>
            <person name="Cheng C.Y."/>
            <person name="Krishnakumar V."/>
            <person name="Chan A.P."/>
            <person name="Thibaud-Nissen F."/>
            <person name="Schobel S."/>
            <person name="Town C.D."/>
        </authorList>
    </citation>
    <scope>GENOME REANNOTATION</scope>
    <source>
        <strain>cv. Columbia</strain>
    </source>
</reference>
<organism>
    <name type="scientific">Arabidopsis thaliana</name>
    <name type="common">Mouse-ear cress</name>
    <dbReference type="NCBI Taxonomy" id="3702"/>
    <lineage>
        <taxon>Eukaryota</taxon>
        <taxon>Viridiplantae</taxon>
        <taxon>Streptophyta</taxon>
        <taxon>Embryophyta</taxon>
        <taxon>Tracheophyta</taxon>
        <taxon>Spermatophyta</taxon>
        <taxon>Magnoliopsida</taxon>
        <taxon>eudicotyledons</taxon>
        <taxon>Gunneridae</taxon>
        <taxon>Pentapetalae</taxon>
        <taxon>rosids</taxon>
        <taxon>malvids</taxon>
        <taxon>Brassicales</taxon>
        <taxon>Brassicaceae</taxon>
        <taxon>Camelineae</taxon>
        <taxon>Arabidopsis</taxon>
    </lineage>
</organism>
<accession>O64770</accession>
<dbReference type="EC" id="2.7.11.1"/>
<dbReference type="EMBL" id="AC004255">
    <property type="protein sequence ID" value="AAC13891.1"/>
    <property type="molecule type" value="Genomic_DNA"/>
</dbReference>
<dbReference type="EMBL" id="CP002684">
    <property type="protein sequence ID" value="AEE33844.1"/>
    <property type="molecule type" value="Genomic_DNA"/>
</dbReference>
<dbReference type="EMBL" id="CP002684">
    <property type="protein sequence ID" value="ANM60681.1"/>
    <property type="molecule type" value="Genomic_DNA"/>
</dbReference>
<dbReference type="EMBL" id="CP002684">
    <property type="protein sequence ID" value="ANM60682.1"/>
    <property type="molecule type" value="Genomic_DNA"/>
</dbReference>
<dbReference type="EMBL" id="CP002684">
    <property type="protein sequence ID" value="ANM60685.1"/>
    <property type="molecule type" value="Genomic_DNA"/>
</dbReference>
<dbReference type="RefSeq" id="NP_001322951.1">
    <property type="nucleotide sequence ID" value="NM_001333978.1"/>
</dbReference>
<dbReference type="RefSeq" id="NP_001322952.1">
    <property type="nucleotide sequence ID" value="NM_001333975.1"/>
</dbReference>
<dbReference type="RefSeq" id="NP_001322955.1">
    <property type="nucleotide sequence ID" value="NM_001333977.1"/>
</dbReference>
<dbReference type="RefSeq" id="NP_176344.1">
    <property type="nucleotide sequence ID" value="NM_104830.2"/>
</dbReference>
<dbReference type="SMR" id="O64770"/>
<dbReference type="BioGRID" id="27666">
    <property type="interactions" value="1"/>
</dbReference>
<dbReference type="FunCoup" id="O64770">
    <property type="interactions" value="26"/>
</dbReference>
<dbReference type="IntAct" id="O64770">
    <property type="interactions" value="1"/>
</dbReference>
<dbReference type="STRING" id="3702.O64770"/>
<dbReference type="GlyGen" id="O64770">
    <property type="glycosylation" value="9 sites"/>
</dbReference>
<dbReference type="PaxDb" id="3702-AT1G61490.1"/>
<dbReference type="EnsemblPlants" id="AT1G61490.1">
    <property type="protein sequence ID" value="AT1G61490.1"/>
    <property type="gene ID" value="AT1G61490"/>
</dbReference>
<dbReference type="EnsemblPlants" id="AT1G61490.2">
    <property type="protein sequence ID" value="AT1G61490.2"/>
    <property type="gene ID" value="AT1G61490"/>
</dbReference>
<dbReference type="EnsemblPlants" id="AT1G61490.4">
    <property type="protein sequence ID" value="AT1G61490.4"/>
    <property type="gene ID" value="AT1G61490"/>
</dbReference>
<dbReference type="EnsemblPlants" id="AT1G61490.5">
    <property type="protein sequence ID" value="AT1G61490.5"/>
    <property type="gene ID" value="AT1G61490"/>
</dbReference>
<dbReference type="GeneID" id="842443"/>
<dbReference type="Gramene" id="AT1G61490.1">
    <property type="protein sequence ID" value="AT1G61490.1"/>
    <property type="gene ID" value="AT1G61490"/>
</dbReference>
<dbReference type="Gramene" id="AT1G61490.2">
    <property type="protein sequence ID" value="AT1G61490.2"/>
    <property type="gene ID" value="AT1G61490"/>
</dbReference>
<dbReference type="Gramene" id="AT1G61490.4">
    <property type="protein sequence ID" value="AT1G61490.4"/>
    <property type="gene ID" value="AT1G61490"/>
</dbReference>
<dbReference type="Gramene" id="AT1G61490.5">
    <property type="protein sequence ID" value="AT1G61490.5"/>
    <property type="gene ID" value="AT1G61490"/>
</dbReference>
<dbReference type="KEGG" id="ath:AT1G61490"/>
<dbReference type="Araport" id="AT1G61490"/>
<dbReference type="TAIR" id="AT1G61490"/>
<dbReference type="eggNOG" id="ENOG502QSUU">
    <property type="taxonomic scope" value="Eukaryota"/>
</dbReference>
<dbReference type="HOGENOM" id="CLU_000288_116_1_1"/>
<dbReference type="InParanoid" id="O64770"/>
<dbReference type="OMA" id="MQFYAGG"/>
<dbReference type="PhylomeDB" id="O64770"/>
<dbReference type="PRO" id="PR:O64770"/>
<dbReference type="Proteomes" id="UP000006548">
    <property type="component" value="Chromosome 1"/>
</dbReference>
<dbReference type="ExpressionAtlas" id="O64770">
    <property type="expression patterns" value="baseline and differential"/>
</dbReference>
<dbReference type="GO" id="GO:0005886">
    <property type="term" value="C:plasma membrane"/>
    <property type="evidence" value="ECO:0007669"/>
    <property type="project" value="UniProtKB-SubCell"/>
</dbReference>
<dbReference type="GO" id="GO:0005524">
    <property type="term" value="F:ATP binding"/>
    <property type="evidence" value="ECO:0007669"/>
    <property type="project" value="UniProtKB-KW"/>
</dbReference>
<dbReference type="GO" id="GO:0005516">
    <property type="term" value="F:calmodulin binding"/>
    <property type="evidence" value="ECO:0000250"/>
    <property type="project" value="UniProtKB"/>
</dbReference>
<dbReference type="GO" id="GO:0030246">
    <property type="term" value="F:carbohydrate binding"/>
    <property type="evidence" value="ECO:0007669"/>
    <property type="project" value="UniProtKB-KW"/>
</dbReference>
<dbReference type="GO" id="GO:0106310">
    <property type="term" value="F:protein serine kinase activity"/>
    <property type="evidence" value="ECO:0007669"/>
    <property type="project" value="RHEA"/>
</dbReference>
<dbReference type="GO" id="GO:0004674">
    <property type="term" value="F:protein serine/threonine kinase activity"/>
    <property type="evidence" value="ECO:0000250"/>
    <property type="project" value="UniProtKB"/>
</dbReference>
<dbReference type="GO" id="GO:0031625">
    <property type="term" value="F:ubiquitin protein ligase binding"/>
    <property type="evidence" value="ECO:0007669"/>
    <property type="project" value="UniProtKB-ARBA"/>
</dbReference>
<dbReference type="GO" id="GO:0048544">
    <property type="term" value="P:recognition of pollen"/>
    <property type="evidence" value="ECO:0007669"/>
    <property type="project" value="InterPro"/>
</dbReference>
<dbReference type="CDD" id="cd00028">
    <property type="entry name" value="B_lectin"/>
    <property type="match status" value="1"/>
</dbReference>
<dbReference type="CDD" id="cd01098">
    <property type="entry name" value="PAN_AP_plant"/>
    <property type="match status" value="1"/>
</dbReference>
<dbReference type="CDD" id="cd14066">
    <property type="entry name" value="STKc_IRAK"/>
    <property type="match status" value="1"/>
</dbReference>
<dbReference type="FunFam" id="1.10.510.10:FF:000345">
    <property type="entry name" value="G-type lectin S-receptor-like serine/threonine-protein kinase"/>
    <property type="match status" value="1"/>
</dbReference>
<dbReference type="FunFam" id="2.90.10.10:FF:000003">
    <property type="entry name" value="G-type lectin S-receptor-like serine/threonine-protein kinase"/>
    <property type="match status" value="1"/>
</dbReference>
<dbReference type="FunFam" id="3.30.200.20:FF:000401">
    <property type="entry name" value="G-type lectin S-receptor-like serine/threonine-protein kinase SD1-29"/>
    <property type="match status" value="1"/>
</dbReference>
<dbReference type="Gene3D" id="2.90.10.10">
    <property type="entry name" value="Bulb-type lectin domain"/>
    <property type="match status" value="1"/>
</dbReference>
<dbReference type="Gene3D" id="3.30.200.20">
    <property type="entry name" value="Phosphorylase Kinase, domain 1"/>
    <property type="match status" value="1"/>
</dbReference>
<dbReference type="Gene3D" id="1.10.510.10">
    <property type="entry name" value="Transferase(Phosphotransferase) domain 1"/>
    <property type="match status" value="1"/>
</dbReference>
<dbReference type="InterPro" id="IPR001480">
    <property type="entry name" value="Bulb-type_lectin_dom"/>
</dbReference>
<dbReference type="InterPro" id="IPR036426">
    <property type="entry name" value="Bulb-type_lectin_dom_sf"/>
</dbReference>
<dbReference type="InterPro" id="IPR011009">
    <property type="entry name" value="Kinase-like_dom_sf"/>
</dbReference>
<dbReference type="InterPro" id="IPR003609">
    <property type="entry name" value="Pan_app"/>
</dbReference>
<dbReference type="InterPro" id="IPR000719">
    <property type="entry name" value="Prot_kinase_dom"/>
</dbReference>
<dbReference type="InterPro" id="IPR017441">
    <property type="entry name" value="Protein_kinase_ATP_BS"/>
</dbReference>
<dbReference type="InterPro" id="IPR021820">
    <property type="entry name" value="S-locus_recpt_kinase_C"/>
</dbReference>
<dbReference type="InterPro" id="IPR000858">
    <property type="entry name" value="S_locus_glycoprot_dom"/>
</dbReference>
<dbReference type="InterPro" id="IPR001245">
    <property type="entry name" value="Ser-Thr/Tyr_kinase_cat_dom"/>
</dbReference>
<dbReference type="InterPro" id="IPR008271">
    <property type="entry name" value="Ser/Thr_kinase_AS"/>
</dbReference>
<dbReference type="InterPro" id="IPR024171">
    <property type="entry name" value="SRK-like_kinase"/>
</dbReference>
<dbReference type="PANTHER" id="PTHR27002:SF506">
    <property type="entry name" value="ATP BINDING _ PROTEIN KINASE"/>
    <property type="match status" value="1"/>
</dbReference>
<dbReference type="PANTHER" id="PTHR27002">
    <property type="entry name" value="RECEPTOR-LIKE SERINE/THREONINE-PROTEIN KINASE SD1-8"/>
    <property type="match status" value="1"/>
</dbReference>
<dbReference type="Pfam" id="PF01453">
    <property type="entry name" value="B_lectin"/>
    <property type="match status" value="1"/>
</dbReference>
<dbReference type="Pfam" id="PF11883">
    <property type="entry name" value="DUF3403"/>
    <property type="match status" value="1"/>
</dbReference>
<dbReference type="Pfam" id="PF08276">
    <property type="entry name" value="PAN_2"/>
    <property type="match status" value="1"/>
</dbReference>
<dbReference type="Pfam" id="PF07714">
    <property type="entry name" value="PK_Tyr_Ser-Thr"/>
    <property type="match status" value="1"/>
</dbReference>
<dbReference type="Pfam" id="PF00954">
    <property type="entry name" value="S_locus_glycop"/>
    <property type="match status" value="1"/>
</dbReference>
<dbReference type="PIRSF" id="PIRSF000641">
    <property type="entry name" value="SRK"/>
    <property type="match status" value="1"/>
</dbReference>
<dbReference type="SMART" id="SM00108">
    <property type="entry name" value="B_lectin"/>
    <property type="match status" value="1"/>
</dbReference>
<dbReference type="SMART" id="SM00473">
    <property type="entry name" value="PAN_AP"/>
    <property type="match status" value="1"/>
</dbReference>
<dbReference type="SMART" id="SM00220">
    <property type="entry name" value="S_TKc"/>
    <property type="match status" value="1"/>
</dbReference>
<dbReference type="SUPFAM" id="SSF51110">
    <property type="entry name" value="alpha-D-mannose-specific plant lectins"/>
    <property type="match status" value="1"/>
</dbReference>
<dbReference type="SUPFAM" id="SSF56112">
    <property type="entry name" value="Protein kinase-like (PK-like)"/>
    <property type="match status" value="1"/>
</dbReference>
<dbReference type="PROSITE" id="PS50927">
    <property type="entry name" value="BULB_LECTIN"/>
    <property type="match status" value="1"/>
</dbReference>
<dbReference type="PROSITE" id="PS50948">
    <property type="entry name" value="PAN"/>
    <property type="match status" value="1"/>
</dbReference>
<dbReference type="PROSITE" id="PS00107">
    <property type="entry name" value="PROTEIN_KINASE_ATP"/>
    <property type="match status" value="1"/>
</dbReference>
<dbReference type="PROSITE" id="PS50011">
    <property type="entry name" value="PROTEIN_KINASE_DOM"/>
    <property type="match status" value="1"/>
</dbReference>
<dbReference type="PROSITE" id="PS00108">
    <property type="entry name" value="PROTEIN_KINASE_ST"/>
    <property type="match status" value="1"/>
</dbReference>
<proteinExistence type="inferred from homology"/>
<evidence type="ECO:0000250" key="1"/>
<evidence type="ECO:0000250" key="2">
    <source>
        <dbReference type="UniProtKB" id="Q9LPZ9"/>
    </source>
</evidence>
<evidence type="ECO:0000255" key="3"/>
<evidence type="ECO:0000255" key="4">
    <source>
        <dbReference type="PROSITE-ProRule" id="PRU00038"/>
    </source>
</evidence>
<evidence type="ECO:0000255" key="5">
    <source>
        <dbReference type="PROSITE-ProRule" id="PRU00159"/>
    </source>
</evidence>
<evidence type="ECO:0000255" key="6">
    <source>
        <dbReference type="PROSITE-ProRule" id="PRU00315"/>
    </source>
</evidence>
<evidence type="ECO:0000255" key="7">
    <source>
        <dbReference type="PROSITE-ProRule" id="PRU10027"/>
    </source>
</evidence>
<protein>
    <recommendedName>
        <fullName>G-type lectin S-receptor-like serine/threonine-protein kinase At1g61490</fullName>
        <ecNumber>2.7.11.1</ecNumber>
    </recommendedName>
</protein>
<keyword id="KW-0067">ATP-binding</keyword>
<keyword id="KW-1003">Cell membrane</keyword>
<keyword id="KW-1015">Disulfide bond</keyword>
<keyword id="KW-0245">EGF-like domain</keyword>
<keyword id="KW-0325">Glycoprotein</keyword>
<keyword id="KW-0418">Kinase</keyword>
<keyword id="KW-0430">Lectin</keyword>
<keyword id="KW-0472">Membrane</keyword>
<keyword id="KW-0547">Nucleotide-binding</keyword>
<keyword id="KW-0597">Phosphoprotein</keyword>
<keyword id="KW-0675">Receptor</keyword>
<keyword id="KW-1185">Reference proteome</keyword>
<keyword id="KW-0723">Serine/threonine-protein kinase</keyword>
<keyword id="KW-0732">Signal</keyword>
<keyword id="KW-0808">Transferase</keyword>
<keyword id="KW-0812">Transmembrane</keyword>
<keyword id="KW-1133">Transmembrane helix</keyword>
<comment type="catalytic activity">
    <reaction>
        <text>L-seryl-[protein] + ATP = O-phospho-L-seryl-[protein] + ADP + H(+)</text>
        <dbReference type="Rhea" id="RHEA:17989"/>
        <dbReference type="Rhea" id="RHEA-COMP:9863"/>
        <dbReference type="Rhea" id="RHEA-COMP:11604"/>
        <dbReference type="ChEBI" id="CHEBI:15378"/>
        <dbReference type="ChEBI" id="CHEBI:29999"/>
        <dbReference type="ChEBI" id="CHEBI:30616"/>
        <dbReference type="ChEBI" id="CHEBI:83421"/>
        <dbReference type="ChEBI" id="CHEBI:456216"/>
        <dbReference type="EC" id="2.7.11.1"/>
    </reaction>
</comment>
<comment type="catalytic activity">
    <reaction>
        <text>L-threonyl-[protein] + ATP = O-phospho-L-threonyl-[protein] + ADP + H(+)</text>
        <dbReference type="Rhea" id="RHEA:46608"/>
        <dbReference type="Rhea" id="RHEA-COMP:11060"/>
        <dbReference type="Rhea" id="RHEA-COMP:11605"/>
        <dbReference type="ChEBI" id="CHEBI:15378"/>
        <dbReference type="ChEBI" id="CHEBI:30013"/>
        <dbReference type="ChEBI" id="CHEBI:30616"/>
        <dbReference type="ChEBI" id="CHEBI:61977"/>
        <dbReference type="ChEBI" id="CHEBI:456216"/>
        <dbReference type="EC" id="2.7.11.1"/>
    </reaction>
</comment>
<comment type="subcellular location">
    <subcellularLocation>
        <location evidence="1">Cell membrane</location>
        <topology evidence="1">Single-pass type I membrane protein</topology>
    </subcellularLocation>
</comment>
<comment type="similarity">
    <text evidence="5">Belongs to the protein kinase superfamily. Ser/Thr protein kinase family.</text>
</comment>